<feature type="chain" id="PRO_0000380735" description="Aldo-keto reductase ML1669">
    <location>
        <begin position="1"/>
        <end position="282"/>
    </location>
</feature>
<feature type="active site" description="Proton donor" evidence="2">
    <location>
        <position position="57"/>
    </location>
</feature>
<feature type="binding site" evidence="1">
    <location>
        <position position="197"/>
    </location>
    <ligand>
        <name>NADPH</name>
        <dbReference type="ChEBI" id="CHEBI:57783"/>
    </ligand>
</feature>
<feature type="binding site" evidence="1">
    <location>
        <position position="235"/>
    </location>
    <ligand>
        <name>NADPH</name>
        <dbReference type="ChEBI" id="CHEBI:57783"/>
    </ligand>
</feature>
<feature type="binding site" evidence="1">
    <location>
        <position position="237"/>
    </location>
    <ligand>
        <name>NADPH</name>
        <dbReference type="ChEBI" id="CHEBI:57783"/>
    </ligand>
</feature>
<feature type="binding site" evidence="1">
    <location>
        <position position="238"/>
    </location>
    <ligand>
        <name>NADPH</name>
        <dbReference type="ChEBI" id="CHEBI:57783"/>
    </ligand>
</feature>
<feature type="binding site" evidence="1">
    <location>
        <position position="239"/>
    </location>
    <ligand>
        <name>NADPH</name>
        <dbReference type="ChEBI" id="CHEBI:57783"/>
    </ligand>
</feature>
<feature type="binding site" evidence="1">
    <location>
        <position position="246"/>
    </location>
    <ligand>
        <name>NADPH</name>
        <dbReference type="ChEBI" id="CHEBI:57783"/>
    </ligand>
</feature>
<feature type="binding site" evidence="1">
    <location>
        <position position="247"/>
    </location>
    <ligand>
        <name>NADPH</name>
        <dbReference type="ChEBI" id="CHEBI:57783"/>
    </ligand>
</feature>
<feature type="binding site" evidence="1">
    <location>
        <position position="273"/>
    </location>
    <ligand>
        <name>NADPH</name>
        <dbReference type="ChEBI" id="CHEBI:57783"/>
    </ligand>
</feature>
<accession>O69462</accession>
<protein>
    <recommendedName>
        <fullName evidence="1">Aldo-keto reductase ML1669</fullName>
        <ecNumber evidence="1">1.1.1.-</ecNumber>
    </recommendedName>
</protein>
<sequence length="282" mass="30693">MMPSTPRTSIPSITLNDENTMPLLGLGVAELSEDETERAVLAALEIGCRLIDTAAAYGNEAAVSRAIAASGIPRAQLFVTTKLATPDQGFTKSQDACNASLDRLGMDYVDLYLIHWPAPPVGQYVDAWGGMIQSRGEGHARSIGVCNFTEEHLSAIIDLTFVTPAVNQIELHPLLNQDEMRKSNAQHNVITQSYTPLVLGRLMDNSTLTAIAAEYGKTPAQVLLRWNLQLGNAVVFRSAKAEHIASNFDVFDFELAVNHMDAMNELHDGTRLRPDPETYAGS</sequence>
<proteinExistence type="inferred from homology"/>
<gene>
    <name type="ordered locus">ML1669</name>
    <name type="ORF">MLCB1243.03c</name>
</gene>
<organism>
    <name type="scientific">Mycobacterium leprae (strain TN)</name>
    <dbReference type="NCBI Taxonomy" id="272631"/>
    <lineage>
        <taxon>Bacteria</taxon>
        <taxon>Bacillati</taxon>
        <taxon>Actinomycetota</taxon>
        <taxon>Actinomycetes</taxon>
        <taxon>Mycobacteriales</taxon>
        <taxon>Mycobacteriaceae</taxon>
        <taxon>Mycobacterium</taxon>
    </lineage>
</organism>
<dbReference type="EC" id="1.1.1.-" evidence="1"/>
<dbReference type="EMBL" id="AL023635">
    <property type="protein sequence ID" value="CAA19184.1"/>
    <property type="molecule type" value="Genomic_DNA"/>
</dbReference>
<dbReference type="EMBL" id="AL583923">
    <property type="protein sequence ID" value="CAC30622.1"/>
    <property type="molecule type" value="Genomic_DNA"/>
</dbReference>
<dbReference type="PIR" id="T44699">
    <property type="entry name" value="T44699"/>
</dbReference>
<dbReference type="RefSeq" id="NP_302147.1">
    <property type="nucleotide sequence ID" value="NC_002677.1"/>
</dbReference>
<dbReference type="RefSeq" id="WP_010908468.1">
    <property type="nucleotide sequence ID" value="NC_002677.1"/>
</dbReference>
<dbReference type="SMR" id="O69462"/>
<dbReference type="STRING" id="272631.gene:17575512"/>
<dbReference type="KEGG" id="mle:ML1669"/>
<dbReference type="PATRIC" id="fig|272631.5.peg.3155"/>
<dbReference type="Leproma" id="ML1669"/>
<dbReference type="eggNOG" id="COG0656">
    <property type="taxonomic scope" value="Bacteria"/>
</dbReference>
<dbReference type="HOGENOM" id="CLU_023205_0_1_11"/>
<dbReference type="OrthoDB" id="9804790at2"/>
<dbReference type="Proteomes" id="UP000000806">
    <property type="component" value="Chromosome"/>
</dbReference>
<dbReference type="GO" id="GO:0004033">
    <property type="term" value="F:aldo-keto reductase (NADPH) activity"/>
    <property type="evidence" value="ECO:0007669"/>
    <property type="project" value="TreeGrafter"/>
</dbReference>
<dbReference type="CDD" id="cd19134">
    <property type="entry name" value="AKR_AKR5H1"/>
    <property type="match status" value="1"/>
</dbReference>
<dbReference type="FunFam" id="3.20.20.100:FF:000002">
    <property type="entry name" value="2,5-diketo-D-gluconic acid reductase A"/>
    <property type="match status" value="1"/>
</dbReference>
<dbReference type="Gene3D" id="3.20.20.100">
    <property type="entry name" value="NADP-dependent oxidoreductase domain"/>
    <property type="match status" value="1"/>
</dbReference>
<dbReference type="InterPro" id="IPR020471">
    <property type="entry name" value="AKR"/>
</dbReference>
<dbReference type="InterPro" id="IPR018170">
    <property type="entry name" value="Aldo/ket_reductase_CS"/>
</dbReference>
<dbReference type="InterPro" id="IPR023210">
    <property type="entry name" value="NADP_OxRdtase_dom"/>
</dbReference>
<dbReference type="InterPro" id="IPR036812">
    <property type="entry name" value="NADP_OxRdtase_dom_sf"/>
</dbReference>
<dbReference type="PANTHER" id="PTHR43827">
    <property type="entry name" value="2,5-DIKETO-D-GLUCONIC ACID REDUCTASE"/>
    <property type="match status" value="1"/>
</dbReference>
<dbReference type="PANTHER" id="PTHR43827:SF3">
    <property type="entry name" value="NADP-DEPENDENT OXIDOREDUCTASE DOMAIN-CONTAINING PROTEIN"/>
    <property type="match status" value="1"/>
</dbReference>
<dbReference type="Pfam" id="PF00248">
    <property type="entry name" value="Aldo_ket_red"/>
    <property type="match status" value="1"/>
</dbReference>
<dbReference type="PIRSF" id="PIRSF000097">
    <property type="entry name" value="AKR"/>
    <property type="match status" value="1"/>
</dbReference>
<dbReference type="PRINTS" id="PR00069">
    <property type="entry name" value="ALDKETRDTASE"/>
</dbReference>
<dbReference type="SUPFAM" id="SSF51430">
    <property type="entry name" value="NAD(P)-linked oxidoreductase"/>
    <property type="match status" value="1"/>
</dbReference>
<dbReference type="PROSITE" id="PS00062">
    <property type="entry name" value="ALDOKETO_REDUCTASE_2"/>
    <property type="match status" value="1"/>
</dbReference>
<keyword id="KW-0521">NADP</keyword>
<keyword id="KW-0560">Oxidoreductase</keyword>
<keyword id="KW-1185">Reference proteome</keyword>
<name>Y1669_MYCLE</name>
<comment type="similarity">
    <text evidence="3">Belongs to the aldo/keto reductase family.</text>
</comment>
<evidence type="ECO:0000250" key="1">
    <source>
        <dbReference type="UniProtKB" id="A0QV09"/>
    </source>
</evidence>
<evidence type="ECO:0000250" key="2">
    <source>
        <dbReference type="UniProtKB" id="P80874"/>
    </source>
</evidence>
<evidence type="ECO:0000305" key="3"/>
<reference key="1">
    <citation type="journal article" date="2001" name="Nature">
        <title>Massive gene decay in the leprosy bacillus.</title>
        <authorList>
            <person name="Cole S.T."/>
            <person name="Eiglmeier K."/>
            <person name="Parkhill J."/>
            <person name="James K.D."/>
            <person name="Thomson N.R."/>
            <person name="Wheeler P.R."/>
            <person name="Honore N."/>
            <person name="Garnier T."/>
            <person name="Churcher C.M."/>
            <person name="Harris D.E."/>
            <person name="Mungall K.L."/>
            <person name="Basham D."/>
            <person name="Brown D."/>
            <person name="Chillingworth T."/>
            <person name="Connor R."/>
            <person name="Davies R.M."/>
            <person name="Devlin K."/>
            <person name="Duthoy S."/>
            <person name="Feltwell T."/>
            <person name="Fraser A."/>
            <person name="Hamlin N."/>
            <person name="Holroyd S."/>
            <person name="Hornsby T."/>
            <person name="Jagels K."/>
            <person name="Lacroix C."/>
            <person name="Maclean J."/>
            <person name="Moule S."/>
            <person name="Murphy L.D."/>
            <person name="Oliver K."/>
            <person name="Quail M.A."/>
            <person name="Rajandream M.A."/>
            <person name="Rutherford K.M."/>
            <person name="Rutter S."/>
            <person name="Seeger K."/>
            <person name="Simon S."/>
            <person name="Simmonds M."/>
            <person name="Skelton J."/>
            <person name="Squares R."/>
            <person name="Squares S."/>
            <person name="Stevens K."/>
            <person name="Taylor K."/>
            <person name="Whitehead S."/>
            <person name="Woodward J.R."/>
            <person name="Barrell B.G."/>
        </authorList>
    </citation>
    <scope>NUCLEOTIDE SEQUENCE [LARGE SCALE GENOMIC DNA]</scope>
    <source>
        <strain>TN</strain>
    </source>
</reference>